<gene>
    <name type="ORF">SPAC6B12.14c</name>
</gene>
<organism>
    <name type="scientific">Schizosaccharomyces pombe (strain 972 / ATCC 24843)</name>
    <name type="common">Fission yeast</name>
    <dbReference type="NCBI Taxonomy" id="284812"/>
    <lineage>
        <taxon>Eukaryota</taxon>
        <taxon>Fungi</taxon>
        <taxon>Dikarya</taxon>
        <taxon>Ascomycota</taxon>
        <taxon>Taphrinomycotina</taxon>
        <taxon>Schizosaccharomycetes</taxon>
        <taxon>Schizosaccharomycetales</taxon>
        <taxon>Schizosaccharomycetaceae</taxon>
        <taxon>Schizosaccharomyces</taxon>
    </lineage>
</organism>
<keyword id="KW-1185">Reference proteome</keyword>
<accession>O14219</accession>
<feature type="chain" id="PRO_0000116668" description="Uncharacterized protein C6B12.14c">
    <location>
        <begin position="1"/>
        <end position="154"/>
    </location>
</feature>
<sequence length="154" mass="17397">MDTNLNFSPSQSNDLSTSSGYENVLSHFKQAALSVTQLYQASTTEVLKAQKAGYNQALREVLELIESGASIDFISQYCLEKLASSDNDSSVHNHHDNSVLRNEDTQLQPHIVCNRTVRAGRPVLDEDDEEMNIATPHKRRVYDLNSSWMKRGRR</sequence>
<dbReference type="EMBL" id="CU329670">
    <property type="protein sequence ID" value="CAB11074.1"/>
    <property type="molecule type" value="Genomic_DNA"/>
</dbReference>
<dbReference type="PIR" id="T39021">
    <property type="entry name" value="T39021"/>
</dbReference>
<dbReference type="RefSeq" id="NP_593769.1">
    <property type="nucleotide sequence ID" value="NM_001019199.2"/>
</dbReference>
<dbReference type="SMR" id="O14219"/>
<dbReference type="iPTMnet" id="O14219"/>
<dbReference type="PaxDb" id="4896-SPAC6B12.14c.1"/>
<dbReference type="EnsemblFungi" id="SPAC6B12.14c.1">
    <property type="protein sequence ID" value="SPAC6B12.14c.1:pep"/>
    <property type="gene ID" value="SPAC6B12.14c"/>
</dbReference>
<dbReference type="KEGG" id="spo:2543300"/>
<dbReference type="PomBase" id="SPAC6B12.14c"/>
<dbReference type="VEuPathDB" id="FungiDB:SPAC6B12.14c"/>
<dbReference type="HOGENOM" id="CLU_1778547_0_0_1"/>
<dbReference type="InParanoid" id="O14219"/>
<dbReference type="OMA" id="LIECNGV"/>
<dbReference type="PRO" id="PR:O14219"/>
<dbReference type="Proteomes" id="UP000002485">
    <property type="component" value="Chromosome I"/>
</dbReference>
<dbReference type="GO" id="GO:0005634">
    <property type="term" value="C:nucleus"/>
    <property type="evidence" value="ECO:0007005"/>
    <property type="project" value="PomBase"/>
</dbReference>
<dbReference type="PANTHER" id="PTHR38645">
    <property type="entry name" value="CHROMOSOME 9, WHOLE GENOME SHOTGUN SEQUENCE"/>
    <property type="match status" value="1"/>
</dbReference>
<dbReference type="PANTHER" id="PTHR38645:SF1">
    <property type="entry name" value="YALI0F12243P"/>
    <property type="match status" value="1"/>
</dbReference>
<reference key="1">
    <citation type="journal article" date="2002" name="Nature">
        <title>The genome sequence of Schizosaccharomyces pombe.</title>
        <authorList>
            <person name="Wood V."/>
            <person name="Gwilliam R."/>
            <person name="Rajandream M.A."/>
            <person name="Lyne M.H."/>
            <person name="Lyne R."/>
            <person name="Stewart A."/>
            <person name="Sgouros J.G."/>
            <person name="Peat N."/>
            <person name="Hayles J."/>
            <person name="Baker S.G."/>
            <person name="Basham D."/>
            <person name="Bowman S."/>
            <person name="Brooks K."/>
            <person name="Brown D."/>
            <person name="Brown S."/>
            <person name="Chillingworth T."/>
            <person name="Churcher C.M."/>
            <person name="Collins M."/>
            <person name="Connor R."/>
            <person name="Cronin A."/>
            <person name="Davis P."/>
            <person name="Feltwell T."/>
            <person name="Fraser A."/>
            <person name="Gentles S."/>
            <person name="Goble A."/>
            <person name="Hamlin N."/>
            <person name="Harris D.E."/>
            <person name="Hidalgo J."/>
            <person name="Hodgson G."/>
            <person name="Holroyd S."/>
            <person name="Hornsby T."/>
            <person name="Howarth S."/>
            <person name="Huckle E.J."/>
            <person name="Hunt S."/>
            <person name="Jagels K."/>
            <person name="James K.D."/>
            <person name="Jones L."/>
            <person name="Jones M."/>
            <person name="Leather S."/>
            <person name="McDonald S."/>
            <person name="McLean J."/>
            <person name="Mooney P."/>
            <person name="Moule S."/>
            <person name="Mungall K.L."/>
            <person name="Murphy L.D."/>
            <person name="Niblett D."/>
            <person name="Odell C."/>
            <person name="Oliver K."/>
            <person name="O'Neil S."/>
            <person name="Pearson D."/>
            <person name="Quail M.A."/>
            <person name="Rabbinowitsch E."/>
            <person name="Rutherford K.M."/>
            <person name="Rutter S."/>
            <person name="Saunders D."/>
            <person name="Seeger K."/>
            <person name="Sharp S."/>
            <person name="Skelton J."/>
            <person name="Simmonds M.N."/>
            <person name="Squares R."/>
            <person name="Squares S."/>
            <person name="Stevens K."/>
            <person name="Taylor K."/>
            <person name="Taylor R.G."/>
            <person name="Tivey A."/>
            <person name="Walsh S.V."/>
            <person name="Warren T."/>
            <person name="Whitehead S."/>
            <person name="Woodward J.R."/>
            <person name="Volckaert G."/>
            <person name="Aert R."/>
            <person name="Robben J."/>
            <person name="Grymonprez B."/>
            <person name="Weltjens I."/>
            <person name="Vanstreels E."/>
            <person name="Rieger M."/>
            <person name="Schaefer M."/>
            <person name="Mueller-Auer S."/>
            <person name="Gabel C."/>
            <person name="Fuchs M."/>
            <person name="Duesterhoeft A."/>
            <person name="Fritzc C."/>
            <person name="Holzer E."/>
            <person name="Moestl D."/>
            <person name="Hilbert H."/>
            <person name="Borzym K."/>
            <person name="Langer I."/>
            <person name="Beck A."/>
            <person name="Lehrach H."/>
            <person name="Reinhardt R."/>
            <person name="Pohl T.M."/>
            <person name="Eger P."/>
            <person name="Zimmermann W."/>
            <person name="Wedler H."/>
            <person name="Wambutt R."/>
            <person name="Purnelle B."/>
            <person name="Goffeau A."/>
            <person name="Cadieu E."/>
            <person name="Dreano S."/>
            <person name="Gloux S."/>
            <person name="Lelaure V."/>
            <person name="Mottier S."/>
            <person name="Galibert F."/>
            <person name="Aves S.J."/>
            <person name="Xiang Z."/>
            <person name="Hunt C."/>
            <person name="Moore K."/>
            <person name="Hurst S.M."/>
            <person name="Lucas M."/>
            <person name="Rochet M."/>
            <person name="Gaillardin C."/>
            <person name="Tallada V.A."/>
            <person name="Garzon A."/>
            <person name="Thode G."/>
            <person name="Daga R.R."/>
            <person name="Cruzado L."/>
            <person name="Jimenez J."/>
            <person name="Sanchez M."/>
            <person name="del Rey F."/>
            <person name="Benito J."/>
            <person name="Dominguez A."/>
            <person name="Revuelta J.L."/>
            <person name="Moreno S."/>
            <person name="Armstrong J."/>
            <person name="Forsburg S.L."/>
            <person name="Cerutti L."/>
            <person name="Lowe T."/>
            <person name="McCombie W.R."/>
            <person name="Paulsen I."/>
            <person name="Potashkin J."/>
            <person name="Shpakovski G.V."/>
            <person name="Ussery D."/>
            <person name="Barrell B.G."/>
            <person name="Nurse P."/>
        </authorList>
    </citation>
    <scope>NUCLEOTIDE SEQUENCE [LARGE SCALE GENOMIC DNA]</scope>
    <source>
        <strain>972 / ATCC 24843</strain>
    </source>
</reference>
<proteinExistence type="predicted"/>
<protein>
    <recommendedName>
        <fullName>Uncharacterized protein C6B12.14c</fullName>
    </recommendedName>
</protein>
<name>YDTE_SCHPO</name>